<protein>
    <recommendedName>
        <fullName evidence="1">NAD kinase</fullName>
        <ecNumber evidence="1">2.7.1.23</ecNumber>
    </recommendedName>
    <alternativeName>
        <fullName evidence="1">ATP-dependent NAD kinase</fullName>
    </alternativeName>
</protein>
<reference key="1">
    <citation type="journal article" date="2009" name="PLoS Genet.">
        <title>Organised genome dynamics in the Escherichia coli species results in highly diverse adaptive paths.</title>
        <authorList>
            <person name="Touchon M."/>
            <person name="Hoede C."/>
            <person name="Tenaillon O."/>
            <person name="Barbe V."/>
            <person name="Baeriswyl S."/>
            <person name="Bidet P."/>
            <person name="Bingen E."/>
            <person name="Bonacorsi S."/>
            <person name="Bouchier C."/>
            <person name="Bouvet O."/>
            <person name="Calteau A."/>
            <person name="Chiapello H."/>
            <person name="Clermont O."/>
            <person name="Cruveiller S."/>
            <person name="Danchin A."/>
            <person name="Diard M."/>
            <person name="Dossat C."/>
            <person name="Karoui M.E."/>
            <person name="Frapy E."/>
            <person name="Garry L."/>
            <person name="Ghigo J.M."/>
            <person name="Gilles A.M."/>
            <person name="Johnson J."/>
            <person name="Le Bouguenec C."/>
            <person name="Lescat M."/>
            <person name="Mangenot S."/>
            <person name="Martinez-Jehanne V."/>
            <person name="Matic I."/>
            <person name="Nassif X."/>
            <person name="Oztas S."/>
            <person name="Petit M.A."/>
            <person name="Pichon C."/>
            <person name="Rouy Z."/>
            <person name="Ruf C.S."/>
            <person name="Schneider D."/>
            <person name="Tourret J."/>
            <person name="Vacherie B."/>
            <person name="Vallenet D."/>
            <person name="Medigue C."/>
            <person name="Rocha E.P.C."/>
            <person name="Denamur E."/>
        </authorList>
    </citation>
    <scope>NUCLEOTIDE SEQUENCE [LARGE SCALE GENOMIC DNA]</scope>
    <source>
        <strain>S88 / ExPEC</strain>
    </source>
</reference>
<proteinExistence type="inferred from homology"/>
<gene>
    <name evidence="1" type="primary">nadK</name>
    <name type="ordered locus">ECS88_2801</name>
</gene>
<dbReference type="EC" id="2.7.1.23" evidence="1"/>
<dbReference type="EMBL" id="CU928161">
    <property type="protein sequence ID" value="CAR04054.1"/>
    <property type="molecule type" value="Genomic_DNA"/>
</dbReference>
<dbReference type="RefSeq" id="WP_001059176.1">
    <property type="nucleotide sequence ID" value="NC_011742.1"/>
</dbReference>
<dbReference type="SMR" id="B7MIV2"/>
<dbReference type="KEGG" id="ecz:ECS88_2801"/>
<dbReference type="HOGENOM" id="CLU_008831_0_1_6"/>
<dbReference type="Proteomes" id="UP000000747">
    <property type="component" value="Chromosome"/>
</dbReference>
<dbReference type="GO" id="GO:0005737">
    <property type="term" value="C:cytoplasm"/>
    <property type="evidence" value="ECO:0007669"/>
    <property type="project" value="UniProtKB-SubCell"/>
</dbReference>
<dbReference type="GO" id="GO:0005524">
    <property type="term" value="F:ATP binding"/>
    <property type="evidence" value="ECO:0007669"/>
    <property type="project" value="UniProtKB-KW"/>
</dbReference>
<dbReference type="GO" id="GO:0046872">
    <property type="term" value="F:metal ion binding"/>
    <property type="evidence" value="ECO:0007669"/>
    <property type="project" value="UniProtKB-UniRule"/>
</dbReference>
<dbReference type="GO" id="GO:0051287">
    <property type="term" value="F:NAD binding"/>
    <property type="evidence" value="ECO:0007669"/>
    <property type="project" value="UniProtKB-ARBA"/>
</dbReference>
<dbReference type="GO" id="GO:0003951">
    <property type="term" value="F:NAD+ kinase activity"/>
    <property type="evidence" value="ECO:0007669"/>
    <property type="project" value="UniProtKB-UniRule"/>
</dbReference>
<dbReference type="GO" id="GO:0019674">
    <property type="term" value="P:NAD metabolic process"/>
    <property type="evidence" value="ECO:0007669"/>
    <property type="project" value="InterPro"/>
</dbReference>
<dbReference type="GO" id="GO:0006741">
    <property type="term" value="P:NADP biosynthetic process"/>
    <property type="evidence" value="ECO:0007669"/>
    <property type="project" value="UniProtKB-UniRule"/>
</dbReference>
<dbReference type="FunFam" id="2.60.200.30:FF:000001">
    <property type="entry name" value="NAD kinase"/>
    <property type="match status" value="1"/>
</dbReference>
<dbReference type="FunFam" id="3.40.50.10330:FF:000004">
    <property type="entry name" value="NAD kinase"/>
    <property type="match status" value="1"/>
</dbReference>
<dbReference type="Gene3D" id="3.40.50.10330">
    <property type="entry name" value="Probable inorganic polyphosphate/atp-NAD kinase, domain 1"/>
    <property type="match status" value="1"/>
</dbReference>
<dbReference type="Gene3D" id="2.60.200.30">
    <property type="entry name" value="Probable inorganic polyphosphate/atp-NAD kinase, domain 2"/>
    <property type="match status" value="1"/>
</dbReference>
<dbReference type="HAMAP" id="MF_00361">
    <property type="entry name" value="NAD_kinase"/>
    <property type="match status" value="1"/>
</dbReference>
<dbReference type="InterPro" id="IPR017438">
    <property type="entry name" value="ATP-NAD_kinase_N"/>
</dbReference>
<dbReference type="InterPro" id="IPR017437">
    <property type="entry name" value="ATP-NAD_kinase_PpnK-typ_C"/>
</dbReference>
<dbReference type="InterPro" id="IPR016064">
    <property type="entry name" value="NAD/diacylglycerol_kinase_sf"/>
</dbReference>
<dbReference type="InterPro" id="IPR002504">
    <property type="entry name" value="NADK"/>
</dbReference>
<dbReference type="NCBIfam" id="NF002306">
    <property type="entry name" value="PRK01231.1"/>
    <property type="match status" value="1"/>
</dbReference>
<dbReference type="NCBIfam" id="NF002893">
    <property type="entry name" value="PRK03378.1"/>
    <property type="match status" value="1"/>
</dbReference>
<dbReference type="PANTHER" id="PTHR20275">
    <property type="entry name" value="NAD KINASE"/>
    <property type="match status" value="1"/>
</dbReference>
<dbReference type="PANTHER" id="PTHR20275:SF0">
    <property type="entry name" value="NAD KINASE"/>
    <property type="match status" value="1"/>
</dbReference>
<dbReference type="Pfam" id="PF01513">
    <property type="entry name" value="NAD_kinase"/>
    <property type="match status" value="1"/>
</dbReference>
<dbReference type="Pfam" id="PF20143">
    <property type="entry name" value="NAD_kinase_C"/>
    <property type="match status" value="1"/>
</dbReference>
<dbReference type="SUPFAM" id="SSF111331">
    <property type="entry name" value="NAD kinase/diacylglycerol kinase-like"/>
    <property type="match status" value="1"/>
</dbReference>
<comment type="function">
    <text evidence="1">Involved in the regulation of the intracellular balance of NAD and NADP, and is a key enzyme in the biosynthesis of NADP. Catalyzes specifically the phosphorylation on 2'-hydroxyl of the adenosine moiety of NAD to yield NADP.</text>
</comment>
<comment type="catalytic activity">
    <reaction evidence="1">
        <text>NAD(+) + ATP = ADP + NADP(+) + H(+)</text>
        <dbReference type="Rhea" id="RHEA:18629"/>
        <dbReference type="ChEBI" id="CHEBI:15378"/>
        <dbReference type="ChEBI" id="CHEBI:30616"/>
        <dbReference type="ChEBI" id="CHEBI:57540"/>
        <dbReference type="ChEBI" id="CHEBI:58349"/>
        <dbReference type="ChEBI" id="CHEBI:456216"/>
        <dbReference type="EC" id="2.7.1.23"/>
    </reaction>
</comment>
<comment type="cofactor">
    <cofactor evidence="1">
        <name>a divalent metal cation</name>
        <dbReference type="ChEBI" id="CHEBI:60240"/>
    </cofactor>
</comment>
<comment type="subcellular location">
    <subcellularLocation>
        <location evidence="1">Cytoplasm</location>
    </subcellularLocation>
</comment>
<comment type="similarity">
    <text evidence="1">Belongs to the NAD kinase family.</text>
</comment>
<sequence>MNNHFKCIGIVGHPRHPTALTTHEMLYRWLCTKGYEVIVEQQIAHELQLKNVKTGTLAEIGQQADLAVVVGGDGNMLGAARTLARYDIKVIGINRGNLGFLTDLDPDNAQQQLADVLEGHYISEKRFLLEAQVCQQDCQKRISTAINEVVLHPGKVAHMIEFEVYIDEIFAFSQRSDGLIISTPTGSTAYSLSAGGPILTPSLDAITLVPMFPHTLSARPLVINSSSTIRLRFSHRRNDLEISCDSQIALPIQEGEDVLIRRCDYHLNLIHPKDYSYFNTLSTKLGWSKKLF</sequence>
<evidence type="ECO:0000255" key="1">
    <source>
        <dbReference type="HAMAP-Rule" id="MF_00361"/>
    </source>
</evidence>
<organism>
    <name type="scientific">Escherichia coli O45:K1 (strain S88 / ExPEC)</name>
    <dbReference type="NCBI Taxonomy" id="585035"/>
    <lineage>
        <taxon>Bacteria</taxon>
        <taxon>Pseudomonadati</taxon>
        <taxon>Pseudomonadota</taxon>
        <taxon>Gammaproteobacteria</taxon>
        <taxon>Enterobacterales</taxon>
        <taxon>Enterobacteriaceae</taxon>
        <taxon>Escherichia</taxon>
    </lineage>
</organism>
<accession>B7MIV2</accession>
<keyword id="KW-0067">ATP-binding</keyword>
<keyword id="KW-0963">Cytoplasm</keyword>
<keyword id="KW-0418">Kinase</keyword>
<keyword id="KW-0520">NAD</keyword>
<keyword id="KW-0521">NADP</keyword>
<keyword id="KW-0547">Nucleotide-binding</keyword>
<keyword id="KW-1185">Reference proteome</keyword>
<keyword id="KW-0808">Transferase</keyword>
<feature type="chain" id="PRO_1000120852" description="NAD kinase">
    <location>
        <begin position="1"/>
        <end position="292"/>
    </location>
</feature>
<feature type="active site" description="Proton acceptor" evidence="1">
    <location>
        <position position="73"/>
    </location>
</feature>
<feature type="binding site" evidence="1">
    <location>
        <begin position="73"/>
        <end position="74"/>
    </location>
    <ligand>
        <name>NAD(+)</name>
        <dbReference type="ChEBI" id="CHEBI:57540"/>
    </ligand>
</feature>
<feature type="binding site" evidence="1">
    <location>
        <begin position="147"/>
        <end position="148"/>
    </location>
    <ligand>
        <name>NAD(+)</name>
        <dbReference type="ChEBI" id="CHEBI:57540"/>
    </ligand>
</feature>
<feature type="binding site" evidence="1">
    <location>
        <position position="158"/>
    </location>
    <ligand>
        <name>NAD(+)</name>
        <dbReference type="ChEBI" id="CHEBI:57540"/>
    </ligand>
</feature>
<feature type="binding site" evidence="1">
    <location>
        <position position="175"/>
    </location>
    <ligand>
        <name>NAD(+)</name>
        <dbReference type="ChEBI" id="CHEBI:57540"/>
    </ligand>
</feature>
<feature type="binding site" evidence="1">
    <location>
        <position position="177"/>
    </location>
    <ligand>
        <name>NAD(+)</name>
        <dbReference type="ChEBI" id="CHEBI:57540"/>
    </ligand>
</feature>
<feature type="binding site" evidence="1">
    <location>
        <begin position="188"/>
        <end position="193"/>
    </location>
    <ligand>
        <name>NAD(+)</name>
        <dbReference type="ChEBI" id="CHEBI:57540"/>
    </ligand>
</feature>
<feature type="binding site" evidence="1">
    <location>
        <position position="247"/>
    </location>
    <ligand>
        <name>NAD(+)</name>
        <dbReference type="ChEBI" id="CHEBI:57540"/>
    </ligand>
</feature>
<name>NADK_ECO45</name>